<dbReference type="EMBL" id="CP000393">
    <property type="protein sequence ID" value="ABG52015.1"/>
    <property type="molecule type" value="Genomic_DNA"/>
</dbReference>
<dbReference type="RefSeq" id="WP_011612376.1">
    <property type="nucleotide sequence ID" value="NC_008312.1"/>
</dbReference>
<dbReference type="SMR" id="Q110Q9"/>
<dbReference type="STRING" id="203124.Tery_2841"/>
<dbReference type="KEGG" id="ter:Tery_2841"/>
<dbReference type="eggNOG" id="COG0445">
    <property type="taxonomic scope" value="Bacteria"/>
</dbReference>
<dbReference type="HOGENOM" id="CLU_007831_2_2_3"/>
<dbReference type="OrthoDB" id="9815560at2"/>
<dbReference type="GO" id="GO:0005737">
    <property type="term" value="C:cytoplasm"/>
    <property type="evidence" value="ECO:0007669"/>
    <property type="project" value="UniProtKB-SubCell"/>
</dbReference>
<dbReference type="GO" id="GO:0050660">
    <property type="term" value="F:flavin adenine dinucleotide binding"/>
    <property type="evidence" value="ECO:0007669"/>
    <property type="project" value="UniProtKB-UniRule"/>
</dbReference>
<dbReference type="GO" id="GO:0030488">
    <property type="term" value="P:tRNA methylation"/>
    <property type="evidence" value="ECO:0007669"/>
    <property type="project" value="TreeGrafter"/>
</dbReference>
<dbReference type="GO" id="GO:0002098">
    <property type="term" value="P:tRNA wobble uridine modification"/>
    <property type="evidence" value="ECO:0007669"/>
    <property type="project" value="InterPro"/>
</dbReference>
<dbReference type="FunFam" id="1.10.10.1800:FF:000001">
    <property type="entry name" value="tRNA uridine 5-carboxymethylaminomethyl modification enzyme MnmG"/>
    <property type="match status" value="1"/>
</dbReference>
<dbReference type="FunFam" id="1.10.150.570:FF:000001">
    <property type="entry name" value="tRNA uridine 5-carboxymethylaminomethyl modification enzyme MnmG"/>
    <property type="match status" value="1"/>
</dbReference>
<dbReference type="FunFam" id="3.50.50.60:FF:000094">
    <property type="entry name" value="tRNA uridine 5-carboxymethylaminomethyl modification enzyme MnmG"/>
    <property type="match status" value="1"/>
</dbReference>
<dbReference type="FunFam" id="3.50.50.60:FF:000119">
    <property type="entry name" value="tRNA uridine 5-carboxymethylaminomethyl modification enzyme MnmG"/>
    <property type="match status" value="1"/>
</dbReference>
<dbReference type="Gene3D" id="3.50.50.60">
    <property type="entry name" value="FAD/NAD(P)-binding domain"/>
    <property type="match status" value="2"/>
</dbReference>
<dbReference type="Gene3D" id="1.10.150.570">
    <property type="entry name" value="GidA associated domain, C-terminal subdomain"/>
    <property type="match status" value="1"/>
</dbReference>
<dbReference type="Gene3D" id="1.10.10.1800">
    <property type="entry name" value="tRNA uridine 5-carboxymethylaminomethyl modification enzyme MnmG/GidA"/>
    <property type="match status" value="1"/>
</dbReference>
<dbReference type="HAMAP" id="MF_00129">
    <property type="entry name" value="MnmG_GidA"/>
    <property type="match status" value="1"/>
</dbReference>
<dbReference type="InterPro" id="IPR036188">
    <property type="entry name" value="FAD/NAD-bd_sf"/>
</dbReference>
<dbReference type="InterPro" id="IPR049312">
    <property type="entry name" value="GIDA_C_N"/>
</dbReference>
<dbReference type="InterPro" id="IPR004416">
    <property type="entry name" value="MnmG"/>
</dbReference>
<dbReference type="InterPro" id="IPR002218">
    <property type="entry name" value="MnmG-rel"/>
</dbReference>
<dbReference type="InterPro" id="IPR020595">
    <property type="entry name" value="MnmG-rel_CS"/>
</dbReference>
<dbReference type="InterPro" id="IPR026904">
    <property type="entry name" value="MnmG_C"/>
</dbReference>
<dbReference type="InterPro" id="IPR047001">
    <property type="entry name" value="MnmG_C_subdom"/>
</dbReference>
<dbReference type="InterPro" id="IPR044920">
    <property type="entry name" value="MnmG_C_subdom_sf"/>
</dbReference>
<dbReference type="InterPro" id="IPR040131">
    <property type="entry name" value="MnmG_N"/>
</dbReference>
<dbReference type="NCBIfam" id="TIGR00136">
    <property type="entry name" value="mnmG_gidA"/>
    <property type="match status" value="1"/>
</dbReference>
<dbReference type="PANTHER" id="PTHR11806">
    <property type="entry name" value="GLUCOSE INHIBITED DIVISION PROTEIN A"/>
    <property type="match status" value="1"/>
</dbReference>
<dbReference type="PANTHER" id="PTHR11806:SF0">
    <property type="entry name" value="PROTEIN MTO1 HOMOLOG, MITOCHONDRIAL"/>
    <property type="match status" value="1"/>
</dbReference>
<dbReference type="Pfam" id="PF01134">
    <property type="entry name" value="GIDA"/>
    <property type="match status" value="1"/>
</dbReference>
<dbReference type="Pfam" id="PF21680">
    <property type="entry name" value="GIDA_C_1st"/>
    <property type="match status" value="1"/>
</dbReference>
<dbReference type="Pfam" id="PF13932">
    <property type="entry name" value="SAM_GIDA_C"/>
    <property type="match status" value="1"/>
</dbReference>
<dbReference type="SMART" id="SM01228">
    <property type="entry name" value="GIDA_assoc_3"/>
    <property type="match status" value="1"/>
</dbReference>
<dbReference type="SUPFAM" id="SSF51905">
    <property type="entry name" value="FAD/NAD(P)-binding domain"/>
    <property type="match status" value="1"/>
</dbReference>
<dbReference type="PROSITE" id="PS01280">
    <property type="entry name" value="GIDA_1"/>
    <property type="match status" value="1"/>
</dbReference>
<dbReference type="PROSITE" id="PS01281">
    <property type="entry name" value="GIDA_2"/>
    <property type="match status" value="1"/>
</dbReference>
<evidence type="ECO:0000255" key="1">
    <source>
        <dbReference type="HAMAP-Rule" id="MF_00129"/>
    </source>
</evidence>
<comment type="function">
    <text evidence="1">NAD-binding protein involved in the addition of a carboxymethylaminomethyl (cmnm) group at the wobble position (U34) of certain tRNAs, forming tRNA-cmnm(5)s(2)U34.</text>
</comment>
<comment type="cofactor">
    <cofactor evidence="1">
        <name>FAD</name>
        <dbReference type="ChEBI" id="CHEBI:57692"/>
    </cofactor>
</comment>
<comment type="subunit">
    <text evidence="1">Homodimer. Heterotetramer of two MnmE and two MnmG subunits.</text>
</comment>
<comment type="subcellular location">
    <subcellularLocation>
        <location evidence="1">Cytoplasm</location>
    </subcellularLocation>
</comment>
<comment type="similarity">
    <text evidence="1">Belongs to the MnmG family.</text>
</comment>
<keyword id="KW-0963">Cytoplasm</keyword>
<keyword id="KW-0274">FAD</keyword>
<keyword id="KW-0285">Flavoprotein</keyword>
<keyword id="KW-0520">NAD</keyword>
<keyword id="KW-0819">tRNA processing</keyword>
<sequence length="637" mass="71659">MNQTFDFQDEYDIIVVGAGHSGCEAALATARLGCHTLLLTLNLDKIAWQPCNPAVGGPAKSQLTHEVDALGGEIGKMADRTYLQKRILNSSRGPAVWALRAQTDKREYATIMRNIVENQENLRVRESMVTDLVLGDNEEIIGVETYFGVAFKCKAVILTTGTFLGGVIWVGNKSMPAGRAGEFSAIGLSETLNKLGFETGRLKTGTPARVDKRSVDYTDLEAQPGDEKVRWFTFDPEVWVEREQMCCYLTRTTPETHKLIRDNLHLSPVYGGWVDAKGPRYCPSIEDKIVRFADKHSHQIFIEPEGRDIPELYIQGFSTGLPEKLQLQMLQSLPGLENCLMLRPAYAVEYDYLPATQCYPTLMTKKIEGLFCAGQINGTTGYEEAAAQGLVAGINAVKFVKNEEMIIFPREQSYIGTLIDDLCTKDLREPYRMLTSRSEYRLILRSDNADQRLTPLGREIGLIDDRRWELFESKQANINSEKSRLNSTRIKELDEVAINIVADTHTKIKGSITLADLLRRPGFHYVDLEKYNLGNLDLKLVEKEGAEIDIKYSGYLQRQQNQIDQISRQKNRRLPTNLDYLSISTLSLEAREKLSKVQPLTIGQASRIGGVNPADINALLVYLEVQYRQFQLTSANV</sequence>
<organism>
    <name type="scientific">Trichodesmium erythraeum (strain IMS101)</name>
    <dbReference type="NCBI Taxonomy" id="203124"/>
    <lineage>
        <taxon>Bacteria</taxon>
        <taxon>Bacillati</taxon>
        <taxon>Cyanobacteriota</taxon>
        <taxon>Cyanophyceae</taxon>
        <taxon>Oscillatoriophycideae</taxon>
        <taxon>Oscillatoriales</taxon>
        <taxon>Microcoleaceae</taxon>
        <taxon>Trichodesmium</taxon>
    </lineage>
</organism>
<reference key="1">
    <citation type="journal article" date="2015" name="Proc. Natl. Acad. Sci. U.S.A.">
        <title>Trichodesmium genome maintains abundant, widespread noncoding DNA in situ, despite oligotrophic lifestyle.</title>
        <authorList>
            <person name="Walworth N."/>
            <person name="Pfreundt U."/>
            <person name="Nelson W.C."/>
            <person name="Mincer T."/>
            <person name="Heidelberg J.F."/>
            <person name="Fu F."/>
            <person name="Waterbury J.B."/>
            <person name="Glavina del Rio T."/>
            <person name="Goodwin L."/>
            <person name="Kyrpides N.C."/>
            <person name="Land M.L."/>
            <person name="Woyke T."/>
            <person name="Hutchins D.A."/>
            <person name="Hess W.R."/>
            <person name="Webb E.A."/>
        </authorList>
    </citation>
    <scope>NUCLEOTIDE SEQUENCE [LARGE SCALE GENOMIC DNA]</scope>
    <source>
        <strain>IMS101</strain>
    </source>
</reference>
<protein>
    <recommendedName>
        <fullName evidence="1">tRNA uridine 5-carboxymethylaminomethyl modification enzyme MnmG</fullName>
    </recommendedName>
    <alternativeName>
        <fullName evidence="1">Glucose-inhibited division protein A</fullName>
    </alternativeName>
</protein>
<gene>
    <name evidence="1" type="primary">mnmG</name>
    <name evidence="1" type="synonym">gidA</name>
    <name type="ordered locus">Tery_2841</name>
</gene>
<accession>Q110Q9</accession>
<proteinExistence type="inferred from homology"/>
<feature type="chain" id="PRO_0000345356" description="tRNA uridine 5-carboxymethylaminomethyl modification enzyme MnmG">
    <location>
        <begin position="1"/>
        <end position="637"/>
    </location>
</feature>
<feature type="binding site" evidence="1">
    <location>
        <begin position="17"/>
        <end position="22"/>
    </location>
    <ligand>
        <name>FAD</name>
        <dbReference type="ChEBI" id="CHEBI:57692"/>
    </ligand>
</feature>
<feature type="binding site" evidence="1">
    <location>
        <begin position="278"/>
        <end position="292"/>
    </location>
    <ligand>
        <name>NAD(+)</name>
        <dbReference type="ChEBI" id="CHEBI:57540"/>
    </ligand>
</feature>
<name>MNMG_TRIEI</name>